<dbReference type="EMBL" id="S77489">
    <property type="protein sequence ID" value="AAC60388.1"/>
    <property type="status" value="ALT_FRAME"/>
    <property type="molecule type" value="Genomic_DNA"/>
</dbReference>
<dbReference type="EMBL" id="D12503">
    <property type="protein sequence ID" value="BAA02064.1"/>
    <property type="status" value="ALT_FRAME"/>
    <property type="molecule type" value="Genomic_DNA"/>
</dbReference>
<dbReference type="PIR" id="JU0396">
    <property type="entry name" value="JU0396"/>
</dbReference>
<dbReference type="STRING" id="292.WI67_07195"/>
<dbReference type="TCDB" id="1.B.17.3.2">
    <property type="family name" value="the outer membrane factor (omf) family"/>
</dbReference>
<dbReference type="GO" id="GO:0005886">
    <property type="term" value="C:plasma membrane"/>
    <property type="evidence" value="ECO:0007669"/>
    <property type="project" value="UniProtKB-SubCell"/>
</dbReference>
<dbReference type="GO" id="GO:0015562">
    <property type="term" value="F:efflux transmembrane transporter activity"/>
    <property type="evidence" value="ECO:0007669"/>
    <property type="project" value="InterPro"/>
</dbReference>
<dbReference type="Gene3D" id="1.20.1600.10">
    <property type="entry name" value="Outer membrane efflux proteins (OEP)"/>
    <property type="match status" value="1"/>
</dbReference>
<dbReference type="InterPro" id="IPR050737">
    <property type="entry name" value="OMF"/>
</dbReference>
<dbReference type="InterPro" id="IPR003423">
    <property type="entry name" value="OMP_efflux"/>
</dbReference>
<dbReference type="InterPro" id="IPR010131">
    <property type="entry name" value="RND_efflux_OM_lipoprot_NodT"/>
</dbReference>
<dbReference type="NCBIfam" id="TIGR01845">
    <property type="entry name" value="outer_NodT"/>
    <property type="match status" value="1"/>
</dbReference>
<dbReference type="PANTHER" id="PTHR30203:SF20">
    <property type="entry name" value="MULTIDRUG RESISTANCE OUTER MEMBRANE PROTEIN MDTP-RELATED"/>
    <property type="match status" value="1"/>
</dbReference>
<dbReference type="PANTHER" id="PTHR30203">
    <property type="entry name" value="OUTER MEMBRANE CATION EFFLUX PROTEIN"/>
    <property type="match status" value="1"/>
</dbReference>
<dbReference type="Pfam" id="PF02321">
    <property type="entry name" value="OEP"/>
    <property type="match status" value="2"/>
</dbReference>
<dbReference type="SUPFAM" id="SSF56954">
    <property type="entry name" value="Outer membrane efflux proteins (OEP)"/>
    <property type="match status" value="1"/>
</dbReference>
<dbReference type="PROSITE" id="PS51257">
    <property type="entry name" value="PROKAR_LIPOPROTEIN"/>
    <property type="match status" value="1"/>
</dbReference>
<evidence type="ECO:0000255" key="1">
    <source>
        <dbReference type="PROSITE-ProRule" id="PRU00303"/>
    </source>
</evidence>
<evidence type="ECO:0000256" key="2">
    <source>
        <dbReference type="SAM" id="MobiDB-lite"/>
    </source>
</evidence>
<evidence type="ECO:0000305" key="3"/>
<organism>
    <name type="scientific">Burkholderia cepacia</name>
    <name type="common">Pseudomonas cepacia</name>
    <dbReference type="NCBI Taxonomy" id="292"/>
    <lineage>
        <taxon>Bacteria</taxon>
        <taxon>Pseudomonadati</taxon>
        <taxon>Pseudomonadota</taxon>
        <taxon>Betaproteobacteria</taxon>
        <taxon>Burkholderiales</taxon>
        <taxon>Burkholderiaceae</taxon>
        <taxon>Burkholderia</taxon>
        <taxon>Burkholderia cepacia complex</taxon>
    </lineage>
</organism>
<comment type="function">
    <text>Involved in the resistance (detoxification) of the fungal toxin fusaric acid.</text>
</comment>
<comment type="subcellular location">
    <subcellularLocation>
        <location evidence="1">Cell membrane</location>
        <topology evidence="1">Lipid-anchor</topology>
    </subcellularLocation>
</comment>
<comment type="similarity">
    <text evidence="3">Belongs to the outer membrane factor (OMF) (TC 1.B.17) family.</text>
</comment>
<comment type="sequence caution" evidence="3">
    <conflict type="frameshift">
        <sequence resource="EMBL-CDS" id="AAC60388"/>
    </conflict>
</comment>
<comment type="sequence caution" evidence="3">
    <conflict type="frameshift">
        <sequence resource="EMBL-CDS" id="BAA02064"/>
    </conflict>
</comment>
<sequence>MQSPATKGTLALAVLAVSLIMAGCASMGDNKPQSARIEANALDAGAAIRAADRDAGWPAADWWRAYRDPQLDTWIAAAQAGXPDARGRRGRVREAQAMARVARSAELPQINGNLSLMRQHWPDNVYYGPGPLANTDTWNNTGTLGLSYHLDLWGKDKNATERALDTAHATAADARAAKLELEVNVVRAYVGMSMNYALLDLAHETFERQRSLADLARKRLQAGLGTQLEVSQAESTLPDYERQIDSYEEAIQLARHQLAALAGKGPGAGDAIKRPRLSLDAPAGLPSAMPADLLGRRPDVVAARWTVDAQARGIDVAKASFYPNIDLLATVGGFGVTAPFTDFLRAMNGGWTAGPALSLPIFEGGRLRAQLGAANAGVRPGGRAIQPDDRRRAQGHRRPGRADPFARYAEEGRRTLGGRQRPQLPAVARRLPPRPDRLRQRAGRAAAIVGAHRKRPPHRSERLAAHAQLMAALGGGVETGTDVPGSQSSHGESAAGAAAPAAASGAKPVAAAARPAQVAAAGAAGVPAAR</sequence>
<keyword id="KW-1003">Cell membrane</keyword>
<keyword id="KW-0449">Lipoprotein</keyword>
<keyword id="KW-0472">Membrane</keyword>
<keyword id="KW-0564">Palmitate</keyword>
<keyword id="KW-0732">Signal</keyword>
<keyword id="KW-0812">Transmembrane</keyword>
<keyword id="KW-1134">Transmembrane beta strand</keyword>
<accession>P24126</accession>
<reference key="1">
    <citation type="journal article" date="1991" name="Agric. Biol. Chem.">
        <title>Molecular cloning and characterization of the fusaric acid-resistance gene from Pseudomonas cepacia.</title>
        <authorList>
            <person name="Utsumi R."/>
            <person name="Yagi T."/>
            <person name="Katayama S."/>
            <person name="Katsuragi K."/>
            <person name="Tachibana K."/>
            <person name="Toyoda H."/>
            <person name="Ouchi S."/>
            <person name="Obata K."/>
            <person name="Shibano Y."/>
            <person name="Noda M."/>
        </authorList>
    </citation>
    <scope>NUCLEOTIDE SEQUENCE [GENOMIC DNA]</scope>
    <source>
        <strain>UK1</strain>
    </source>
</reference>
<reference key="2">
    <citation type="unpublished observations" date="1999-06">
        <authorList>
            <person name="Rudd K.E."/>
        </authorList>
    </citation>
    <scope>CONCEPTUAL TRANSLATION</scope>
</reference>
<gene>
    <name type="primary">fusA</name>
</gene>
<name>FUSA_BURCE</name>
<proteinExistence type="inferred from homology"/>
<protein>
    <recommendedName>
        <fullName>Fusaric acid resistance protein FusA</fullName>
    </recommendedName>
</protein>
<feature type="signal peptide" evidence="1">
    <location>
        <begin position="1"/>
        <end position="23"/>
    </location>
</feature>
<feature type="chain" id="PRO_0000030995" description="Fusaric acid resistance protein FusA">
    <location>
        <begin position="24"/>
        <end position="530"/>
    </location>
</feature>
<feature type="region of interest" description="Disordered" evidence="2">
    <location>
        <begin position="375"/>
        <end position="442"/>
    </location>
</feature>
<feature type="region of interest" description="Disordered" evidence="2">
    <location>
        <begin position="476"/>
        <end position="530"/>
    </location>
</feature>
<feature type="compositionally biased region" description="Low complexity" evidence="2">
    <location>
        <begin position="421"/>
        <end position="430"/>
    </location>
</feature>
<feature type="compositionally biased region" description="Low complexity" evidence="2">
    <location>
        <begin position="494"/>
        <end position="530"/>
    </location>
</feature>
<feature type="lipid moiety-binding region" description="N-palmitoyl cysteine" evidence="1">
    <location>
        <position position="24"/>
    </location>
</feature>
<feature type="lipid moiety-binding region" description="S-diacylglycerol cysteine" evidence="1">
    <location>
        <position position="24"/>
    </location>
</feature>